<name>PURA_METFK</name>
<keyword id="KW-0963">Cytoplasm</keyword>
<keyword id="KW-0342">GTP-binding</keyword>
<keyword id="KW-0436">Ligase</keyword>
<keyword id="KW-0460">Magnesium</keyword>
<keyword id="KW-0479">Metal-binding</keyword>
<keyword id="KW-0547">Nucleotide-binding</keyword>
<keyword id="KW-0658">Purine biosynthesis</keyword>
<keyword id="KW-1185">Reference proteome</keyword>
<protein>
    <recommendedName>
        <fullName evidence="1">Adenylosuccinate synthetase</fullName>
        <shortName evidence="1">AMPSase</shortName>
        <shortName evidence="1">AdSS</shortName>
        <ecNumber evidence="1">6.3.4.4</ecNumber>
    </recommendedName>
    <alternativeName>
        <fullName evidence="1">IMP--aspartate ligase</fullName>
    </alternativeName>
</protein>
<organism>
    <name type="scientific">Methylobacillus flagellatus (strain ATCC 51484 / DSM 6875 / VKM B-1610 / KT)</name>
    <dbReference type="NCBI Taxonomy" id="265072"/>
    <lineage>
        <taxon>Bacteria</taxon>
        <taxon>Pseudomonadati</taxon>
        <taxon>Pseudomonadota</taxon>
        <taxon>Betaproteobacteria</taxon>
        <taxon>Nitrosomonadales</taxon>
        <taxon>Methylophilaceae</taxon>
        <taxon>Methylobacillus</taxon>
    </lineage>
</organism>
<accession>Q1H0Y6</accession>
<reference key="1">
    <citation type="submission" date="2006-03" db="EMBL/GenBank/DDBJ databases">
        <title>Complete sequence of Methylobacillus flagellatus KT.</title>
        <authorList>
            <consortium name="US DOE Joint Genome Institute"/>
            <person name="Copeland A."/>
            <person name="Lucas S."/>
            <person name="Lapidus A."/>
            <person name="Barry K."/>
            <person name="Detter J.C."/>
            <person name="Glavina del Rio T."/>
            <person name="Hammon N."/>
            <person name="Israni S."/>
            <person name="Dalin E."/>
            <person name="Tice H."/>
            <person name="Pitluck S."/>
            <person name="Brettin T."/>
            <person name="Bruce D."/>
            <person name="Han C."/>
            <person name="Tapia R."/>
            <person name="Saunders E."/>
            <person name="Gilna P."/>
            <person name="Schmutz J."/>
            <person name="Larimer F."/>
            <person name="Land M."/>
            <person name="Kyrpides N."/>
            <person name="Anderson I."/>
            <person name="Richardson P."/>
        </authorList>
    </citation>
    <scope>NUCLEOTIDE SEQUENCE [LARGE SCALE GENOMIC DNA]</scope>
    <source>
        <strain>ATCC 51484 / DSM 6875 / VKM B-1610 / KT</strain>
    </source>
</reference>
<evidence type="ECO:0000255" key="1">
    <source>
        <dbReference type="HAMAP-Rule" id="MF_00011"/>
    </source>
</evidence>
<comment type="function">
    <text evidence="1">Plays an important role in the de novo pathway of purine nucleotide biosynthesis. Catalyzes the first committed step in the biosynthesis of AMP from IMP.</text>
</comment>
<comment type="catalytic activity">
    <reaction evidence="1">
        <text>IMP + L-aspartate + GTP = N(6)-(1,2-dicarboxyethyl)-AMP + GDP + phosphate + 2 H(+)</text>
        <dbReference type="Rhea" id="RHEA:15753"/>
        <dbReference type="ChEBI" id="CHEBI:15378"/>
        <dbReference type="ChEBI" id="CHEBI:29991"/>
        <dbReference type="ChEBI" id="CHEBI:37565"/>
        <dbReference type="ChEBI" id="CHEBI:43474"/>
        <dbReference type="ChEBI" id="CHEBI:57567"/>
        <dbReference type="ChEBI" id="CHEBI:58053"/>
        <dbReference type="ChEBI" id="CHEBI:58189"/>
        <dbReference type="EC" id="6.3.4.4"/>
    </reaction>
</comment>
<comment type="cofactor">
    <cofactor evidence="1">
        <name>Mg(2+)</name>
        <dbReference type="ChEBI" id="CHEBI:18420"/>
    </cofactor>
    <text evidence="1">Binds 1 Mg(2+) ion per subunit.</text>
</comment>
<comment type="pathway">
    <text evidence="1">Purine metabolism; AMP biosynthesis via de novo pathway; AMP from IMP: step 1/2.</text>
</comment>
<comment type="subunit">
    <text evidence="1">Homodimer.</text>
</comment>
<comment type="subcellular location">
    <subcellularLocation>
        <location evidence="1">Cytoplasm</location>
    </subcellularLocation>
</comment>
<comment type="similarity">
    <text evidence="1">Belongs to the adenylosuccinate synthetase family.</text>
</comment>
<dbReference type="EC" id="6.3.4.4" evidence="1"/>
<dbReference type="EMBL" id="CP000284">
    <property type="protein sequence ID" value="ABE49851.1"/>
    <property type="molecule type" value="Genomic_DNA"/>
</dbReference>
<dbReference type="RefSeq" id="WP_011479805.1">
    <property type="nucleotide sequence ID" value="NC_007947.1"/>
</dbReference>
<dbReference type="SMR" id="Q1H0Y6"/>
<dbReference type="STRING" id="265072.Mfla_1583"/>
<dbReference type="KEGG" id="mfa:Mfla_1583"/>
<dbReference type="eggNOG" id="COG0104">
    <property type="taxonomic scope" value="Bacteria"/>
</dbReference>
<dbReference type="HOGENOM" id="CLU_029848_0_0_4"/>
<dbReference type="OrthoDB" id="9807553at2"/>
<dbReference type="UniPathway" id="UPA00075">
    <property type="reaction ID" value="UER00335"/>
</dbReference>
<dbReference type="Proteomes" id="UP000002440">
    <property type="component" value="Chromosome"/>
</dbReference>
<dbReference type="GO" id="GO:0005737">
    <property type="term" value="C:cytoplasm"/>
    <property type="evidence" value="ECO:0007669"/>
    <property type="project" value="UniProtKB-SubCell"/>
</dbReference>
<dbReference type="GO" id="GO:0004019">
    <property type="term" value="F:adenylosuccinate synthase activity"/>
    <property type="evidence" value="ECO:0007669"/>
    <property type="project" value="UniProtKB-UniRule"/>
</dbReference>
<dbReference type="GO" id="GO:0005525">
    <property type="term" value="F:GTP binding"/>
    <property type="evidence" value="ECO:0007669"/>
    <property type="project" value="UniProtKB-UniRule"/>
</dbReference>
<dbReference type="GO" id="GO:0000287">
    <property type="term" value="F:magnesium ion binding"/>
    <property type="evidence" value="ECO:0007669"/>
    <property type="project" value="UniProtKB-UniRule"/>
</dbReference>
<dbReference type="GO" id="GO:0044208">
    <property type="term" value="P:'de novo' AMP biosynthetic process"/>
    <property type="evidence" value="ECO:0007669"/>
    <property type="project" value="UniProtKB-UniRule"/>
</dbReference>
<dbReference type="GO" id="GO:0046040">
    <property type="term" value="P:IMP metabolic process"/>
    <property type="evidence" value="ECO:0007669"/>
    <property type="project" value="TreeGrafter"/>
</dbReference>
<dbReference type="CDD" id="cd03108">
    <property type="entry name" value="AdSS"/>
    <property type="match status" value="1"/>
</dbReference>
<dbReference type="FunFam" id="1.10.300.10:FF:000001">
    <property type="entry name" value="Adenylosuccinate synthetase"/>
    <property type="match status" value="1"/>
</dbReference>
<dbReference type="FunFam" id="3.90.170.10:FF:000001">
    <property type="entry name" value="Adenylosuccinate synthetase"/>
    <property type="match status" value="1"/>
</dbReference>
<dbReference type="Gene3D" id="3.40.440.10">
    <property type="entry name" value="Adenylosuccinate Synthetase, subunit A, domain 1"/>
    <property type="match status" value="1"/>
</dbReference>
<dbReference type="Gene3D" id="1.10.300.10">
    <property type="entry name" value="Adenylosuccinate Synthetase, subunit A, domain 2"/>
    <property type="match status" value="1"/>
</dbReference>
<dbReference type="Gene3D" id="3.90.170.10">
    <property type="entry name" value="Adenylosuccinate Synthetase, subunit A, domain 3"/>
    <property type="match status" value="1"/>
</dbReference>
<dbReference type="HAMAP" id="MF_00011">
    <property type="entry name" value="Adenylosucc_synth"/>
    <property type="match status" value="1"/>
</dbReference>
<dbReference type="InterPro" id="IPR018220">
    <property type="entry name" value="Adenylosuccin_syn_GTP-bd"/>
</dbReference>
<dbReference type="InterPro" id="IPR033128">
    <property type="entry name" value="Adenylosuccin_syn_Lys_AS"/>
</dbReference>
<dbReference type="InterPro" id="IPR042109">
    <property type="entry name" value="Adenylosuccinate_synth_dom1"/>
</dbReference>
<dbReference type="InterPro" id="IPR042110">
    <property type="entry name" value="Adenylosuccinate_synth_dom2"/>
</dbReference>
<dbReference type="InterPro" id="IPR042111">
    <property type="entry name" value="Adenylosuccinate_synth_dom3"/>
</dbReference>
<dbReference type="InterPro" id="IPR001114">
    <property type="entry name" value="Adenylosuccinate_synthetase"/>
</dbReference>
<dbReference type="InterPro" id="IPR027417">
    <property type="entry name" value="P-loop_NTPase"/>
</dbReference>
<dbReference type="NCBIfam" id="NF002223">
    <property type="entry name" value="PRK01117.1"/>
    <property type="match status" value="1"/>
</dbReference>
<dbReference type="NCBIfam" id="TIGR00184">
    <property type="entry name" value="purA"/>
    <property type="match status" value="1"/>
</dbReference>
<dbReference type="PANTHER" id="PTHR11846">
    <property type="entry name" value="ADENYLOSUCCINATE SYNTHETASE"/>
    <property type="match status" value="1"/>
</dbReference>
<dbReference type="PANTHER" id="PTHR11846:SF0">
    <property type="entry name" value="ADENYLOSUCCINATE SYNTHETASE"/>
    <property type="match status" value="1"/>
</dbReference>
<dbReference type="Pfam" id="PF00709">
    <property type="entry name" value="Adenylsucc_synt"/>
    <property type="match status" value="1"/>
</dbReference>
<dbReference type="SMART" id="SM00788">
    <property type="entry name" value="Adenylsucc_synt"/>
    <property type="match status" value="1"/>
</dbReference>
<dbReference type="SUPFAM" id="SSF52540">
    <property type="entry name" value="P-loop containing nucleoside triphosphate hydrolases"/>
    <property type="match status" value="1"/>
</dbReference>
<dbReference type="PROSITE" id="PS01266">
    <property type="entry name" value="ADENYLOSUCCIN_SYN_1"/>
    <property type="match status" value="1"/>
</dbReference>
<dbReference type="PROSITE" id="PS00513">
    <property type="entry name" value="ADENYLOSUCCIN_SYN_2"/>
    <property type="match status" value="1"/>
</dbReference>
<sequence>MSKNVVVIGTQWGDEGKGKIVDWLTDHAQGVVRFQGGHNAGHTLVIGQGASQKEYKLNLVPSGIVREGVNCYIGNGVVLDANHLLFEIDGLEKAGLEVRNRLKVSPGCPLILEYHVRLDKAREAAREPGRKIGTTGKGIGPTYEDKVARRALRVYDLFYPERFAEKLREVLDYHNFVLTKYLNAEAVDYQQQLDEALSKAPLLQPLVTDISAALYEANKAGQNLLFEGAQGTLLDVDHGTYPYVTSSNCISGQAAAGTGVGPSMLHYVLGITKAYTTRVGGGPFPSELDIETEDSPGFQMSDKGREIGTVTKRKRRCGWFDAAALRRSARINGLTGLCITKLDVLDGIKELNICTGYELDGKPVDLLPVGADDVARCQPVYETLPGWDESTFGISRWEDLPQNARNYLKRLEALCEVPVDIVSTGPERDETIVLRHPFGA</sequence>
<gene>
    <name evidence="1" type="primary">purA</name>
    <name type="ordered locus">Mfla_1583</name>
</gene>
<proteinExistence type="inferred from homology"/>
<feature type="chain" id="PRO_1000000857" description="Adenylosuccinate synthetase">
    <location>
        <begin position="1"/>
        <end position="440"/>
    </location>
</feature>
<feature type="active site" description="Proton acceptor" evidence="1">
    <location>
        <position position="14"/>
    </location>
</feature>
<feature type="active site" description="Proton donor" evidence="1">
    <location>
        <position position="42"/>
    </location>
</feature>
<feature type="binding site" evidence="1">
    <location>
        <begin position="13"/>
        <end position="19"/>
    </location>
    <ligand>
        <name>GTP</name>
        <dbReference type="ChEBI" id="CHEBI:37565"/>
    </ligand>
</feature>
<feature type="binding site" description="in other chain" evidence="1">
    <location>
        <begin position="14"/>
        <end position="17"/>
    </location>
    <ligand>
        <name>IMP</name>
        <dbReference type="ChEBI" id="CHEBI:58053"/>
        <note>ligand shared between dimeric partners</note>
    </ligand>
</feature>
<feature type="binding site" evidence="1">
    <location>
        <position position="14"/>
    </location>
    <ligand>
        <name>Mg(2+)</name>
        <dbReference type="ChEBI" id="CHEBI:18420"/>
    </ligand>
</feature>
<feature type="binding site" description="in other chain" evidence="1">
    <location>
        <begin position="39"/>
        <end position="42"/>
    </location>
    <ligand>
        <name>IMP</name>
        <dbReference type="ChEBI" id="CHEBI:58053"/>
        <note>ligand shared between dimeric partners</note>
    </ligand>
</feature>
<feature type="binding site" evidence="1">
    <location>
        <begin position="41"/>
        <end position="43"/>
    </location>
    <ligand>
        <name>GTP</name>
        <dbReference type="ChEBI" id="CHEBI:37565"/>
    </ligand>
</feature>
<feature type="binding site" evidence="1">
    <location>
        <position position="41"/>
    </location>
    <ligand>
        <name>Mg(2+)</name>
        <dbReference type="ChEBI" id="CHEBI:18420"/>
    </ligand>
</feature>
<feature type="binding site" description="in other chain" evidence="1">
    <location>
        <position position="135"/>
    </location>
    <ligand>
        <name>IMP</name>
        <dbReference type="ChEBI" id="CHEBI:58053"/>
        <note>ligand shared between dimeric partners</note>
    </ligand>
</feature>
<feature type="binding site" evidence="1">
    <location>
        <position position="149"/>
    </location>
    <ligand>
        <name>IMP</name>
        <dbReference type="ChEBI" id="CHEBI:58053"/>
        <note>ligand shared between dimeric partners</note>
    </ligand>
</feature>
<feature type="binding site" description="in other chain" evidence="1">
    <location>
        <position position="230"/>
    </location>
    <ligand>
        <name>IMP</name>
        <dbReference type="ChEBI" id="CHEBI:58053"/>
        <note>ligand shared between dimeric partners</note>
    </ligand>
</feature>
<feature type="binding site" description="in other chain" evidence="1">
    <location>
        <position position="245"/>
    </location>
    <ligand>
        <name>IMP</name>
        <dbReference type="ChEBI" id="CHEBI:58053"/>
        <note>ligand shared between dimeric partners</note>
    </ligand>
</feature>
<feature type="binding site" evidence="1">
    <location>
        <begin position="309"/>
        <end position="315"/>
    </location>
    <ligand>
        <name>substrate</name>
    </ligand>
</feature>
<feature type="binding site" description="in other chain" evidence="1">
    <location>
        <position position="313"/>
    </location>
    <ligand>
        <name>IMP</name>
        <dbReference type="ChEBI" id="CHEBI:58053"/>
        <note>ligand shared between dimeric partners</note>
    </ligand>
</feature>
<feature type="binding site" evidence="1">
    <location>
        <position position="315"/>
    </location>
    <ligand>
        <name>GTP</name>
        <dbReference type="ChEBI" id="CHEBI:37565"/>
    </ligand>
</feature>
<feature type="binding site" evidence="1">
    <location>
        <begin position="341"/>
        <end position="343"/>
    </location>
    <ligand>
        <name>GTP</name>
        <dbReference type="ChEBI" id="CHEBI:37565"/>
    </ligand>
</feature>
<feature type="binding site" evidence="1">
    <location>
        <begin position="423"/>
        <end position="425"/>
    </location>
    <ligand>
        <name>GTP</name>
        <dbReference type="ChEBI" id="CHEBI:37565"/>
    </ligand>
</feature>